<keyword id="KW-0067">ATP-binding</keyword>
<keyword id="KW-0460">Magnesium</keyword>
<keyword id="KW-0511">Multifunctional enzyme</keyword>
<keyword id="KW-0547">Nucleotide-binding</keyword>
<keyword id="KW-0548">Nucleotidyltransferase</keyword>
<keyword id="KW-1185">Reference proteome</keyword>
<keyword id="KW-0808">Transferase</keyword>
<proteinExistence type="inferred from homology"/>
<feature type="chain" id="PRO_0000209255" description="Bifunctional glutamine synthetase adenylyltransferase/adenylyl-removing enzyme">
    <location>
        <begin position="1"/>
        <end position="1004"/>
    </location>
</feature>
<feature type="region of interest" description="Adenylyl removase" evidence="1">
    <location>
        <begin position="1"/>
        <end position="497"/>
    </location>
</feature>
<feature type="region of interest" description="Adenylyl transferase" evidence="1">
    <location>
        <begin position="502"/>
        <end position="1004"/>
    </location>
</feature>
<dbReference type="EC" id="2.7.7.89" evidence="1"/>
<dbReference type="EC" id="2.7.7.42" evidence="1"/>
<dbReference type="EMBL" id="AL583922">
    <property type="protein sequence ID" value="CAC30581.1"/>
    <property type="molecule type" value="Genomic_DNA"/>
</dbReference>
<dbReference type="PIR" id="H87112">
    <property type="entry name" value="H87112"/>
</dbReference>
<dbReference type="RefSeq" id="NP_302122.1">
    <property type="nucleotide sequence ID" value="NC_002677.1"/>
</dbReference>
<dbReference type="SMR" id="Q9CBT4"/>
<dbReference type="STRING" id="272631.gene:17575471"/>
<dbReference type="KEGG" id="mle:ML1630"/>
<dbReference type="PATRIC" id="fig|272631.5.peg.3073"/>
<dbReference type="Leproma" id="ML1630"/>
<dbReference type="eggNOG" id="COG1391">
    <property type="taxonomic scope" value="Bacteria"/>
</dbReference>
<dbReference type="HOGENOM" id="CLU_006233_1_0_11"/>
<dbReference type="OrthoDB" id="9759366at2"/>
<dbReference type="Proteomes" id="UP000000806">
    <property type="component" value="Chromosome"/>
</dbReference>
<dbReference type="GO" id="GO:0005829">
    <property type="term" value="C:cytosol"/>
    <property type="evidence" value="ECO:0007669"/>
    <property type="project" value="TreeGrafter"/>
</dbReference>
<dbReference type="GO" id="GO:0008882">
    <property type="term" value="F:[glutamate-ammonia-ligase] adenylyltransferase activity"/>
    <property type="evidence" value="ECO:0007669"/>
    <property type="project" value="UniProtKB-UniRule"/>
</dbReference>
<dbReference type="GO" id="GO:0047388">
    <property type="term" value="F:[glutamine synthetase]-adenylyl-L-tyrosine phosphorylase activity"/>
    <property type="evidence" value="ECO:0007669"/>
    <property type="project" value="UniProtKB-EC"/>
</dbReference>
<dbReference type="GO" id="GO:0005524">
    <property type="term" value="F:ATP binding"/>
    <property type="evidence" value="ECO:0007669"/>
    <property type="project" value="UniProtKB-UniRule"/>
</dbReference>
<dbReference type="GO" id="GO:0000287">
    <property type="term" value="F:magnesium ion binding"/>
    <property type="evidence" value="ECO:0007669"/>
    <property type="project" value="UniProtKB-UniRule"/>
</dbReference>
<dbReference type="GO" id="GO:0000820">
    <property type="term" value="P:regulation of glutamine family amino acid metabolic process"/>
    <property type="evidence" value="ECO:0007669"/>
    <property type="project" value="UniProtKB-UniRule"/>
</dbReference>
<dbReference type="CDD" id="cd05401">
    <property type="entry name" value="NT_GlnE_GlnD_like"/>
    <property type="match status" value="2"/>
</dbReference>
<dbReference type="FunFam" id="1.20.120.330:FF:000022">
    <property type="entry name" value="Bifunctional glutamine synthetase adenylyltransferase/adenylyl-removing enzyme"/>
    <property type="match status" value="1"/>
</dbReference>
<dbReference type="Gene3D" id="3.30.460.10">
    <property type="entry name" value="Beta Polymerase, domain 2"/>
    <property type="match status" value="2"/>
</dbReference>
<dbReference type="Gene3D" id="1.20.120.330">
    <property type="entry name" value="Nucleotidyltransferases domain 2"/>
    <property type="match status" value="2"/>
</dbReference>
<dbReference type="HAMAP" id="MF_00802">
    <property type="entry name" value="GlnE"/>
    <property type="match status" value="1"/>
</dbReference>
<dbReference type="InterPro" id="IPR023057">
    <property type="entry name" value="GlnE"/>
</dbReference>
<dbReference type="InterPro" id="IPR005190">
    <property type="entry name" value="GlnE_rpt_dom"/>
</dbReference>
<dbReference type="InterPro" id="IPR043519">
    <property type="entry name" value="NT_sf"/>
</dbReference>
<dbReference type="InterPro" id="IPR013546">
    <property type="entry name" value="PII_UdlTrfase/GS_AdlTrfase"/>
</dbReference>
<dbReference type="NCBIfam" id="NF010707">
    <property type="entry name" value="PRK14109.1"/>
    <property type="match status" value="1"/>
</dbReference>
<dbReference type="PANTHER" id="PTHR30621:SF0">
    <property type="entry name" value="BIFUNCTIONAL GLUTAMINE SYNTHETASE ADENYLYLTRANSFERASE_ADENYLYL-REMOVING ENZYME"/>
    <property type="match status" value="1"/>
</dbReference>
<dbReference type="PANTHER" id="PTHR30621">
    <property type="entry name" value="GLUTAMINE SYNTHETASE ADENYLYLTRANSFERASE"/>
    <property type="match status" value="1"/>
</dbReference>
<dbReference type="Pfam" id="PF08335">
    <property type="entry name" value="GlnD_UR_UTase"/>
    <property type="match status" value="2"/>
</dbReference>
<dbReference type="Pfam" id="PF03710">
    <property type="entry name" value="GlnE"/>
    <property type="match status" value="2"/>
</dbReference>
<dbReference type="SUPFAM" id="SSF81301">
    <property type="entry name" value="Nucleotidyltransferase"/>
    <property type="match status" value="2"/>
</dbReference>
<dbReference type="SUPFAM" id="SSF81593">
    <property type="entry name" value="Nucleotidyltransferase substrate binding subunit/domain"/>
    <property type="match status" value="2"/>
</dbReference>
<accession>Q9CBT4</accession>
<comment type="function">
    <text evidence="1">Involved in the regulation of glutamine synthetase GlnA, a key enzyme in the process to assimilate ammonia. When cellular nitrogen levels are high, the C-terminal adenylyl transferase (AT) inactivates GlnA by covalent transfer of an adenylyl group from ATP to specific tyrosine residue of GlnA, thus reducing its activity. Conversely, when nitrogen levels are low, the N-terminal adenylyl removase (AR) activates GlnA by removing the adenylyl group by phosphorolysis, increasing its activity. The regulatory region of GlnE binds the signal transduction protein PII (GlnB) which indicates the nitrogen status of the cell.</text>
</comment>
<comment type="catalytic activity">
    <reaction evidence="1">
        <text>[glutamine synthetase]-O(4)-(5'-adenylyl)-L-tyrosine + phosphate = [glutamine synthetase]-L-tyrosine + ADP</text>
        <dbReference type="Rhea" id="RHEA:43716"/>
        <dbReference type="Rhea" id="RHEA-COMP:10660"/>
        <dbReference type="Rhea" id="RHEA-COMP:10661"/>
        <dbReference type="ChEBI" id="CHEBI:43474"/>
        <dbReference type="ChEBI" id="CHEBI:46858"/>
        <dbReference type="ChEBI" id="CHEBI:83624"/>
        <dbReference type="ChEBI" id="CHEBI:456216"/>
        <dbReference type="EC" id="2.7.7.89"/>
    </reaction>
</comment>
<comment type="catalytic activity">
    <reaction evidence="1">
        <text>[glutamine synthetase]-L-tyrosine + ATP = [glutamine synthetase]-O(4)-(5'-adenylyl)-L-tyrosine + diphosphate</text>
        <dbReference type="Rhea" id="RHEA:18589"/>
        <dbReference type="Rhea" id="RHEA-COMP:10660"/>
        <dbReference type="Rhea" id="RHEA-COMP:10661"/>
        <dbReference type="ChEBI" id="CHEBI:30616"/>
        <dbReference type="ChEBI" id="CHEBI:33019"/>
        <dbReference type="ChEBI" id="CHEBI:46858"/>
        <dbReference type="ChEBI" id="CHEBI:83624"/>
        <dbReference type="EC" id="2.7.7.42"/>
    </reaction>
</comment>
<comment type="cofactor">
    <cofactor evidence="1">
        <name>Mg(2+)</name>
        <dbReference type="ChEBI" id="CHEBI:18420"/>
    </cofactor>
</comment>
<comment type="similarity">
    <text evidence="1">Belongs to the GlnE family.</text>
</comment>
<evidence type="ECO:0000255" key="1">
    <source>
        <dbReference type="HAMAP-Rule" id="MF_00802"/>
    </source>
</evidence>
<protein>
    <recommendedName>
        <fullName evidence="1">Bifunctional glutamine synthetase adenylyltransferase/adenylyl-removing enzyme</fullName>
    </recommendedName>
    <alternativeName>
        <fullName evidence="1">ATP:glutamine synthetase adenylyltransferase</fullName>
    </alternativeName>
    <alternativeName>
        <fullName evidence="1">ATase</fullName>
    </alternativeName>
    <domain>
        <recommendedName>
            <fullName evidence="1">Glutamine synthetase adenylyl-L-tyrosine phosphorylase</fullName>
            <ecNumber evidence="1">2.7.7.89</ecNumber>
        </recommendedName>
        <alternativeName>
            <fullName evidence="1">Adenylyl removase</fullName>
            <shortName evidence="1">AR</shortName>
            <shortName evidence="1">AT-N</shortName>
        </alternativeName>
    </domain>
    <domain>
        <recommendedName>
            <fullName evidence="1">Glutamine synthetase adenylyl transferase</fullName>
            <ecNumber evidence="1">2.7.7.42</ecNumber>
        </recommendedName>
        <alternativeName>
            <fullName evidence="1">Adenylyl transferase</fullName>
            <shortName evidence="1">AT</shortName>
            <shortName evidence="1">AT-C</shortName>
        </alternativeName>
    </domain>
</protein>
<organism>
    <name type="scientific">Mycobacterium leprae (strain TN)</name>
    <dbReference type="NCBI Taxonomy" id="272631"/>
    <lineage>
        <taxon>Bacteria</taxon>
        <taxon>Bacillati</taxon>
        <taxon>Actinomycetota</taxon>
        <taxon>Actinomycetes</taxon>
        <taxon>Mycobacteriales</taxon>
        <taxon>Mycobacteriaceae</taxon>
        <taxon>Mycobacterium</taxon>
    </lineage>
</organism>
<gene>
    <name evidence="1" type="primary">glnE</name>
    <name type="ordered locus">ML1630</name>
</gene>
<reference key="1">
    <citation type="journal article" date="2001" name="Nature">
        <title>Massive gene decay in the leprosy bacillus.</title>
        <authorList>
            <person name="Cole S.T."/>
            <person name="Eiglmeier K."/>
            <person name="Parkhill J."/>
            <person name="James K.D."/>
            <person name="Thomson N.R."/>
            <person name="Wheeler P.R."/>
            <person name="Honore N."/>
            <person name="Garnier T."/>
            <person name="Churcher C.M."/>
            <person name="Harris D.E."/>
            <person name="Mungall K.L."/>
            <person name="Basham D."/>
            <person name="Brown D."/>
            <person name="Chillingworth T."/>
            <person name="Connor R."/>
            <person name="Davies R.M."/>
            <person name="Devlin K."/>
            <person name="Duthoy S."/>
            <person name="Feltwell T."/>
            <person name="Fraser A."/>
            <person name="Hamlin N."/>
            <person name="Holroyd S."/>
            <person name="Hornsby T."/>
            <person name="Jagels K."/>
            <person name="Lacroix C."/>
            <person name="Maclean J."/>
            <person name="Moule S."/>
            <person name="Murphy L.D."/>
            <person name="Oliver K."/>
            <person name="Quail M.A."/>
            <person name="Rajandream M.A."/>
            <person name="Rutherford K.M."/>
            <person name="Rutter S."/>
            <person name="Seeger K."/>
            <person name="Simon S."/>
            <person name="Simmonds M."/>
            <person name="Skelton J."/>
            <person name="Squares R."/>
            <person name="Squares S."/>
            <person name="Stevens K."/>
            <person name="Taylor K."/>
            <person name="Whitehead S."/>
            <person name="Woodward J.R."/>
            <person name="Barrell B.G."/>
        </authorList>
    </citation>
    <scope>NUCLEOTIDE SEQUENCE [LARGE SCALE GENOMIC DNA]</scope>
    <source>
        <strain>TN</strain>
    </source>
</reference>
<name>GLNE_MYCLE</name>
<sequence length="1004" mass="110238">MCCTTVVVVRKPATERLKRPSVGRLGLFDPHAAENLALLGWYDYDCREHVDLLWSLSRAPDADAVLRPMVRLFENPATGWDELNAALLTDRGLRGRLFAVLGSSLALGDHLVAHPQSWKLLRGRVSLPSRTQLHQAFDECVSNFGDDPLDAPDSVLPRLRTLYCDQLLVLAALDLAATVEDEPVLPFTLVAAQLADIADAAMATALRVAEKIVCGDRTPPRLAVIAMGKWGARELNYVSDVDIIFVAEQADPLSTRVASEMMRVASEAFFQVDAGLRPEGRNGELVRTVESHIAYYQRWAKTWEFQALLKARSAVGDAELGERYLAALMPMVWAACERADFVAEVQAMRRRVEQLVPADVRGRELKLGSGGLRDVEFAVQLLQLVHGRSDESLHVVSTVDALAALGEGGYIGREDAANLTASYEFLRLLEHRLQLQRLKRTHLLPEDGDEEAVRWLARAAHIRPDGRHDAAGVLREELKNQNLRVSQLHAKLFYQPLLESIGPASLEIRHGMTSEAAERQLATLGYEGSQTALKHISALVNQSGRRGRVQSVLLPRLLNWMSYAPDPDGGLLAYRRLSEALSAETWYLSTLRDKPAVARRLMHVLGTSVYVPDLLMRAPEVIQSYGDGLAGPKLLEAEPAMVARALITSAGRHTDPIRAIDAARSLRRRELARVGSADLLGLLEVTEVCKALTSVWVAVLQAALDAVIRAYLPDGDKAPAAIAVIGMGRLGGAELGYGSDADVMFVCEPAIGVEDAQALRWSGMIAERVCRLLRTPSVDPPLDVDANLRPEGRNGPLVRTLGAYAAYYAQWAQPWEIQALLRAHAVAGDADLGQRFLLMADKMRYPPDGVSAEAVREIRRMKARVEAERLPRGADPHTHTKLGRGGLADIEWTVQLMQLRHAHELPALHKTSTLESLDAIAAANLIPEADVDLLRQAWLTATRARNALVLVRGKTTDQLPGPGRQLNAVAVAAGWPSDDGSEFLDNYLRVTRRAKTFVRKVFGS</sequence>